<gene>
    <name evidence="1" type="primary">dapE</name>
    <name type="ordered locus">KPN78578_27540</name>
    <name type="ORF">KPN_02805</name>
</gene>
<dbReference type="EC" id="3.5.1.18" evidence="1"/>
<dbReference type="EMBL" id="CP000647">
    <property type="protein sequence ID" value="ABR78215.1"/>
    <property type="molecule type" value="Genomic_DNA"/>
</dbReference>
<dbReference type="RefSeq" id="WP_015958789.1">
    <property type="nucleotide sequence ID" value="NC_009648.1"/>
</dbReference>
<dbReference type="SMR" id="A6TC94"/>
<dbReference type="STRING" id="272620.KPN_02805"/>
<dbReference type="MEROPS" id="M20.010"/>
<dbReference type="PaxDb" id="272620-KPN_02805"/>
<dbReference type="EnsemblBacteria" id="ABR78215">
    <property type="protein sequence ID" value="ABR78215"/>
    <property type="gene ID" value="KPN_02805"/>
</dbReference>
<dbReference type="KEGG" id="kpn:KPN_02805"/>
<dbReference type="HOGENOM" id="CLU_021802_4_0_6"/>
<dbReference type="UniPathway" id="UPA00034">
    <property type="reaction ID" value="UER00021"/>
</dbReference>
<dbReference type="Proteomes" id="UP000000265">
    <property type="component" value="Chromosome"/>
</dbReference>
<dbReference type="GO" id="GO:0008777">
    <property type="term" value="F:acetylornithine deacetylase activity"/>
    <property type="evidence" value="ECO:0007669"/>
    <property type="project" value="TreeGrafter"/>
</dbReference>
<dbReference type="GO" id="GO:0050897">
    <property type="term" value="F:cobalt ion binding"/>
    <property type="evidence" value="ECO:0007669"/>
    <property type="project" value="UniProtKB-UniRule"/>
</dbReference>
<dbReference type="GO" id="GO:0009014">
    <property type="term" value="F:succinyl-diaminopimelate desuccinylase activity"/>
    <property type="evidence" value="ECO:0007669"/>
    <property type="project" value="UniProtKB-UniRule"/>
</dbReference>
<dbReference type="GO" id="GO:0008270">
    <property type="term" value="F:zinc ion binding"/>
    <property type="evidence" value="ECO:0007669"/>
    <property type="project" value="UniProtKB-UniRule"/>
</dbReference>
<dbReference type="GO" id="GO:0019877">
    <property type="term" value="P:diaminopimelate biosynthetic process"/>
    <property type="evidence" value="ECO:0007669"/>
    <property type="project" value="UniProtKB-UniRule"/>
</dbReference>
<dbReference type="GO" id="GO:0006526">
    <property type="term" value="P:L-arginine biosynthetic process"/>
    <property type="evidence" value="ECO:0007669"/>
    <property type="project" value="TreeGrafter"/>
</dbReference>
<dbReference type="GO" id="GO:0009089">
    <property type="term" value="P:lysine biosynthetic process via diaminopimelate"/>
    <property type="evidence" value="ECO:0007669"/>
    <property type="project" value="UniProtKB-UniRule"/>
</dbReference>
<dbReference type="CDD" id="cd03891">
    <property type="entry name" value="M20_DapE_proteobac"/>
    <property type="match status" value="1"/>
</dbReference>
<dbReference type="FunFam" id="3.30.70.360:FF:000011">
    <property type="entry name" value="Succinyl-diaminopimelate desuccinylase"/>
    <property type="match status" value="1"/>
</dbReference>
<dbReference type="FunFam" id="3.40.630.10:FF:000005">
    <property type="entry name" value="Succinyl-diaminopimelate desuccinylase"/>
    <property type="match status" value="1"/>
</dbReference>
<dbReference type="FunFam" id="3.40.630.10:FF:000010">
    <property type="entry name" value="Succinyl-diaminopimelate desuccinylase"/>
    <property type="match status" value="1"/>
</dbReference>
<dbReference type="Gene3D" id="3.30.70.360">
    <property type="match status" value="1"/>
</dbReference>
<dbReference type="Gene3D" id="3.40.630.10">
    <property type="entry name" value="Zn peptidases"/>
    <property type="match status" value="2"/>
</dbReference>
<dbReference type="HAMAP" id="MF_01690">
    <property type="entry name" value="DapE"/>
    <property type="match status" value="1"/>
</dbReference>
<dbReference type="InterPro" id="IPR001261">
    <property type="entry name" value="ArgE/DapE_CS"/>
</dbReference>
<dbReference type="InterPro" id="IPR036264">
    <property type="entry name" value="Bact_exopeptidase_dim_dom"/>
</dbReference>
<dbReference type="InterPro" id="IPR005941">
    <property type="entry name" value="DapE_proteobac"/>
</dbReference>
<dbReference type="InterPro" id="IPR002933">
    <property type="entry name" value="Peptidase_M20"/>
</dbReference>
<dbReference type="InterPro" id="IPR011650">
    <property type="entry name" value="Peptidase_M20_dimer"/>
</dbReference>
<dbReference type="InterPro" id="IPR050072">
    <property type="entry name" value="Peptidase_M20A"/>
</dbReference>
<dbReference type="NCBIfam" id="TIGR01246">
    <property type="entry name" value="dapE_proteo"/>
    <property type="match status" value="1"/>
</dbReference>
<dbReference type="NCBIfam" id="NF009557">
    <property type="entry name" value="PRK13009.1"/>
    <property type="match status" value="1"/>
</dbReference>
<dbReference type="PANTHER" id="PTHR43808">
    <property type="entry name" value="ACETYLORNITHINE DEACETYLASE"/>
    <property type="match status" value="1"/>
</dbReference>
<dbReference type="PANTHER" id="PTHR43808:SF31">
    <property type="entry name" value="N-ACETYL-L-CITRULLINE DEACETYLASE"/>
    <property type="match status" value="1"/>
</dbReference>
<dbReference type="Pfam" id="PF07687">
    <property type="entry name" value="M20_dimer"/>
    <property type="match status" value="1"/>
</dbReference>
<dbReference type="Pfam" id="PF01546">
    <property type="entry name" value="Peptidase_M20"/>
    <property type="match status" value="1"/>
</dbReference>
<dbReference type="SUPFAM" id="SSF55031">
    <property type="entry name" value="Bacterial exopeptidase dimerisation domain"/>
    <property type="match status" value="1"/>
</dbReference>
<dbReference type="SUPFAM" id="SSF53187">
    <property type="entry name" value="Zn-dependent exopeptidases"/>
    <property type="match status" value="1"/>
</dbReference>
<dbReference type="PROSITE" id="PS00758">
    <property type="entry name" value="ARGE_DAPE_CPG2_1"/>
    <property type="match status" value="1"/>
</dbReference>
<dbReference type="PROSITE" id="PS00759">
    <property type="entry name" value="ARGE_DAPE_CPG2_2"/>
    <property type="match status" value="1"/>
</dbReference>
<organism>
    <name type="scientific">Klebsiella pneumoniae subsp. pneumoniae (strain ATCC 700721 / MGH 78578)</name>
    <dbReference type="NCBI Taxonomy" id="272620"/>
    <lineage>
        <taxon>Bacteria</taxon>
        <taxon>Pseudomonadati</taxon>
        <taxon>Pseudomonadota</taxon>
        <taxon>Gammaproteobacteria</taxon>
        <taxon>Enterobacterales</taxon>
        <taxon>Enterobacteriaceae</taxon>
        <taxon>Klebsiella/Raoultella group</taxon>
        <taxon>Klebsiella</taxon>
        <taxon>Klebsiella pneumoniae complex</taxon>
    </lineage>
</organism>
<comment type="function">
    <text evidence="1">Catalyzes the hydrolysis of N-succinyl-L,L-diaminopimelic acid (SDAP), forming succinate and LL-2,6-diaminopimelate (DAP), an intermediate involved in the bacterial biosynthesis of lysine and meso-diaminopimelic acid, an essential component of bacterial cell walls.</text>
</comment>
<comment type="catalytic activity">
    <reaction evidence="1">
        <text>N-succinyl-(2S,6S)-2,6-diaminopimelate + H2O = (2S,6S)-2,6-diaminopimelate + succinate</text>
        <dbReference type="Rhea" id="RHEA:22608"/>
        <dbReference type="ChEBI" id="CHEBI:15377"/>
        <dbReference type="ChEBI" id="CHEBI:30031"/>
        <dbReference type="ChEBI" id="CHEBI:57609"/>
        <dbReference type="ChEBI" id="CHEBI:58087"/>
        <dbReference type="EC" id="3.5.1.18"/>
    </reaction>
</comment>
<comment type="cofactor">
    <cofactor evidence="1">
        <name>Zn(2+)</name>
        <dbReference type="ChEBI" id="CHEBI:29105"/>
    </cofactor>
    <cofactor evidence="1">
        <name>Co(2+)</name>
        <dbReference type="ChEBI" id="CHEBI:48828"/>
    </cofactor>
    <text evidence="1">Binds 2 Zn(2+) or Co(2+) ions per subunit.</text>
</comment>
<comment type="pathway">
    <text evidence="1">Amino-acid biosynthesis; L-lysine biosynthesis via DAP pathway; LL-2,6-diaminopimelate from (S)-tetrahydrodipicolinate (succinylase route): step 3/3.</text>
</comment>
<comment type="subunit">
    <text evidence="1">Homodimer.</text>
</comment>
<comment type="similarity">
    <text evidence="1">Belongs to the peptidase M20A family. DapE subfamily.</text>
</comment>
<reference key="1">
    <citation type="submission" date="2006-09" db="EMBL/GenBank/DDBJ databases">
        <authorList>
            <consortium name="The Klebsiella pneumonia Genome Sequencing Project"/>
            <person name="McClelland M."/>
            <person name="Sanderson E.K."/>
            <person name="Spieth J."/>
            <person name="Clifton W.S."/>
            <person name="Latreille P."/>
            <person name="Sabo A."/>
            <person name="Pepin K."/>
            <person name="Bhonagiri V."/>
            <person name="Porwollik S."/>
            <person name="Ali J."/>
            <person name="Wilson R.K."/>
        </authorList>
    </citation>
    <scope>NUCLEOTIDE SEQUENCE [LARGE SCALE GENOMIC DNA]</scope>
    <source>
        <strain>ATCC 700721 / MGH 78578</strain>
    </source>
</reference>
<sequence length="375" mass="41453">MSCPVIELAQQLIRRPSLSPDDAGCQALMIERLRAIGFTVEPMDFGDTQNFWAWRGHGETLAFAGHTDVVPAGDADRWINPPFEPTIRDGMLFGRGAADMKGSLAAMVVAAERFVAQYPNHRGRLAFLITSDEEASAKNGTVKVVETLMARNERLDYCLVGEPSSTEVVGDVVKNGRRGSLTCNLTIHGVQGHVAYPHLADNPVHRAAPMLAELVNIEWDKGNEFFPPTSMQIANVQSGTGSNNVIPGDMFVQFNFRFSTELTDEMIKSRVIALLEKYQLRYRLEWWLSGQPFLTGRGKLVDAVVNAIEHYNEIKPQLLTNGGTSDGRFIARMGAQVVELGPVNATIHKINECVNAADLQLLARMYQRVMEQLVA</sequence>
<keyword id="KW-0028">Amino-acid biosynthesis</keyword>
<keyword id="KW-0170">Cobalt</keyword>
<keyword id="KW-0220">Diaminopimelate biosynthesis</keyword>
<keyword id="KW-0378">Hydrolase</keyword>
<keyword id="KW-0457">Lysine biosynthesis</keyword>
<keyword id="KW-0479">Metal-binding</keyword>
<keyword id="KW-0862">Zinc</keyword>
<accession>A6TC94</accession>
<protein>
    <recommendedName>
        <fullName evidence="1">Succinyl-diaminopimelate desuccinylase</fullName>
        <shortName evidence="1">SDAP desuccinylase</shortName>
        <ecNumber evidence="1">3.5.1.18</ecNumber>
    </recommendedName>
    <alternativeName>
        <fullName evidence="1">N-succinyl-LL-2,6-diaminoheptanedioate amidohydrolase</fullName>
    </alternativeName>
</protein>
<name>DAPE_KLEP7</name>
<feature type="chain" id="PRO_0000375597" description="Succinyl-diaminopimelate desuccinylase">
    <location>
        <begin position="1"/>
        <end position="375"/>
    </location>
</feature>
<feature type="active site" evidence="1">
    <location>
        <position position="68"/>
    </location>
</feature>
<feature type="active site" description="Proton acceptor" evidence="1">
    <location>
        <position position="133"/>
    </location>
</feature>
<feature type="binding site" evidence="1">
    <location>
        <position position="66"/>
    </location>
    <ligand>
        <name>Zn(2+)</name>
        <dbReference type="ChEBI" id="CHEBI:29105"/>
        <label>1</label>
    </ligand>
</feature>
<feature type="binding site" evidence="1">
    <location>
        <position position="99"/>
    </location>
    <ligand>
        <name>Zn(2+)</name>
        <dbReference type="ChEBI" id="CHEBI:29105"/>
        <label>1</label>
    </ligand>
</feature>
<feature type="binding site" evidence="1">
    <location>
        <position position="99"/>
    </location>
    <ligand>
        <name>Zn(2+)</name>
        <dbReference type="ChEBI" id="CHEBI:29105"/>
        <label>2</label>
    </ligand>
</feature>
<feature type="binding site" evidence="1">
    <location>
        <position position="134"/>
    </location>
    <ligand>
        <name>Zn(2+)</name>
        <dbReference type="ChEBI" id="CHEBI:29105"/>
        <label>2</label>
    </ligand>
</feature>
<feature type="binding site" evidence="1">
    <location>
        <position position="162"/>
    </location>
    <ligand>
        <name>Zn(2+)</name>
        <dbReference type="ChEBI" id="CHEBI:29105"/>
        <label>1</label>
    </ligand>
</feature>
<feature type="binding site" evidence="1">
    <location>
        <position position="348"/>
    </location>
    <ligand>
        <name>Zn(2+)</name>
        <dbReference type="ChEBI" id="CHEBI:29105"/>
        <label>2</label>
    </ligand>
</feature>
<proteinExistence type="inferred from homology"/>
<evidence type="ECO:0000255" key="1">
    <source>
        <dbReference type="HAMAP-Rule" id="MF_01690"/>
    </source>
</evidence>